<accession>P16568</accession>
<accession>Q9VJD5</accession>
<dbReference type="EMBL" id="M31684">
    <property type="protein sequence ID" value="AAA28393.1"/>
    <property type="molecule type" value="mRNA"/>
</dbReference>
<dbReference type="EMBL" id="X51652">
    <property type="protein sequence ID" value="CAA35964.1"/>
    <property type="molecule type" value="mRNA"/>
</dbReference>
<dbReference type="EMBL" id="AE014134">
    <property type="protein sequence ID" value="AAF53616.1"/>
    <property type="molecule type" value="Genomic_DNA"/>
</dbReference>
<dbReference type="EMBL" id="AY069452">
    <property type="protein sequence ID" value="AAL39597.1"/>
    <property type="molecule type" value="mRNA"/>
</dbReference>
<dbReference type="PIR" id="A34219">
    <property type="entry name" value="A34219"/>
</dbReference>
<dbReference type="RefSeq" id="NP_001260530.1">
    <property type="nucleotide sequence ID" value="NM_001273601.1"/>
</dbReference>
<dbReference type="RefSeq" id="NP_724056.1">
    <property type="nucleotide sequence ID" value="NM_165220.3"/>
</dbReference>
<dbReference type="PDB" id="4BL6">
    <property type="method" value="X-ray"/>
    <property type="resolution" value="2.18 A"/>
    <property type="chains" value="A/B/C/D=656-745"/>
</dbReference>
<dbReference type="PDB" id="6TZW">
    <property type="method" value="X-ray"/>
    <property type="resolution" value="2.35 A"/>
    <property type="chains" value="A/B=656-745"/>
</dbReference>
<dbReference type="PDBsum" id="4BL6"/>
<dbReference type="PDBsum" id="6TZW"/>
<dbReference type="SMR" id="P16568"/>
<dbReference type="BioGRID" id="61047">
    <property type="interactions" value="34"/>
</dbReference>
<dbReference type="DIP" id="DIP-21297N"/>
<dbReference type="FunCoup" id="P16568">
    <property type="interactions" value="1712"/>
</dbReference>
<dbReference type="IntAct" id="P16568">
    <property type="interactions" value="19"/>
</dbReference>
<dbReference type="MINT" id="P16568"/>
<dbReference type="STRING" id="7227.FBpp0303259"/>
<dbReference type="iPTMnet" id="P16568"/>
<dbReference type="PaxDb" id="7227-FBpp0303258"/>
<dbReference type="ABCD" id="P16568">
    <property type="antibodies" value="12 sequenced antibodies"/>
</dbReference>
<dbReference type="DNASU" id="35051"/>
<dbReference type="EnsemblMetazoa" id="FBtr0081002">
    <property type="protein sequence ID" value="FBpp0080555"/>
    <property type="gene ID" value="FBgn0000183"/>
</dbReference>
<dbReference type="EnsemblMetazoa" id="FBtr0330225">
    <property type="protein sequence ID" value="FBpp0303258"/>
    <property type="gene ID" value="FBgn0000183"/>
</dbReference>
<dbReference type="GeneID" id="35051"/>
<dbReference type="KEGG" id="dme:Dmel_CG6605"/>
<dbReference type="AGR" id="FB:FBgn0000183"/>
<dbReference type="CTD" id="35051"/>
<dbReference type="FlyBase" id="FBgn0000183">
    <property type="gene designation" value="BicD"/>
</dbReference>
<dbReference type="VEuPathDB" id="VectorBase:FBgn0000183"/>
<dbReference type="eggNOG" id="KOG0999">
    <property type="taxonomic scope" value="Eukaryota"/>
</dbReference>
<dbReference type="GeneTree" id="ENSGT00940000154471"/>
<dbReference type="InParanoid" id="P16568"/>
<dbReference type="OMA" id="TNERDRM"/>
<dbReference type="OrthoDB" id="10069295at2759"/>
<dbReference type="PhylomeDB" id="P16568"/>
<dbReference type="Reactome" id="R-DME-6811436">
    <property type="pathway name" value="COPI-independent Golgi-to-ER retrograde traffic"/>
</dbReference>
<dbReference type="SignaLink" id="P16568"/>
<dbReference type="BioGRID-ORCS" id="35051">
    <property type="hits" value="0 hits in 3 CRISPR screens"/>
</dbReference>
<dbReference type="EvolutionaryTrace" id="P16568"/>
<dbReference type="GenomeRNAi" id="35051"/>
<dbReference type="PRO" id="PR:P16568"/>
<dbReference type="Proteomes" id="UP000000803">
    <property type="component" value="Chromosome 2L"/>
</dbReference>
<dbReference type="Bgee" id="FBgn0000183">
    <property type="expression patterns" value="Expressed in adult Malpighian tubule bar-shaped cell of initial segment in Malpighian tubule and 312 other cell types or tissues"/>
</dbReference>
<dbReference type="ExpressionAtlas" id="P16568">
    <property type="expression patterns" value="baseline and differential"/>
</dbReference>
<dbReference type="GO" id="GO:0005737">
    <property type="term" value="C:cytoplasm"/>
    <property type="evidence" value="ECO:0000314"/>
    <property type="project" value="FlyBase"/>
</dbReference>
<dbReference type="GO" id="GO:0005856">
    <property type="term" value="C:cytoskeleton"/>
    <property type="evidence" value="ECO:0007669"/>
    <property type="project" value="UniProtKB-SubCell"/>
</dbReference>
<dbReference type="GO" id="GO:0005829">
    <property type="term" value="C:cytosol"/>
    <property type="evidence" value="ECO:0007005"/>
    <property type="project" value="FlyBase"/>
</dbReference>
<dbReference type="GO" id="GO:0005794">
    <property type="term" value="C:Golgi apparatus"/>
    <property type="evidence" value="ECO:0000318"/>
    <property type="project" value="GO_Central"/>
</dbReference>
<dbReference type="GO" id="GO:0098793">
    <property type="term" value="C:presynapse"/>
    <property type="evidence" value="ECO:0007669"/>
    <property type="project" value="GOC"/>
</dbReference>
<dbReference type="GO" id="GO:0140312">
    <property type="term" value="F:cargo adaptor activity"/>
    <property type="evidence" value="ECO:0000315"/>
    <property type="project" value="FlyBase"/>
</dbReference>
<dbReference type="GO" id="GO:0032050">
    <property type="term" value="F:clathrin heavy chain binding"/>
    <property type="evidence" value="ECO:0000353"/>
    <property type="project" value="FlyBase"/>
</dbReference>
<dbReference type="GO" id="GO:0008093">
    <property type="term" value="F:cytoskeletal anchor activity"/>
    <property type="evidence" value="ECO:0007669"/>
    <property type="project" value="InterPro"/>
</dbReference>
<dbReference type="GO" id="GO:0034452">
    <property type="term" value="F:dynactin binding"/>
    <property type="evidence" value="ECO:0000318"/>
    <property type="project" value="GO_Central"/>
</dbReference>
<dbReference type="GO" id="GO:0070840">
    <property type="term" value="F:dynein complex binding"/>
    <property type="evidence" value="ECO:0000318"/>
    <property type="project" value="GO_Central"/>
</dbReference>
<dbReference type="GO" id="GO:0031267">
    <property type="term" value="F:small GTPase binding"/>
    <property type="evidence" value="ECO:0000353"/>
    <property type="project" value="FlyBase"/>
</dbReference>
<dbReference type="GO" id="GO:0070727">
    <property type="term" value="P:cellular macromolecule localization"/>
    <property type="evidence" value="ECO:0000315"/>
    <property type="project" value="FlyBase"/>
</dbReference>
<dbReference type="GO" id="GO:0022416">
    <property type="term" value="P:chaeta development"/>
    <property type="evidence" value="ECO:0000316"/>
    <property type="project" value="FlyBase"/>
</dbReference>
<dbReference type="GO" id="GO:0007293">
    <property type="term" value="P:germarium-derived egg chamber formation"/>
    <property type="evidence" value="ECO:0000315"/>
    <property type="project" value="FlyBase"/>
</dbReference>
<dbReference type="GO" id="GO:0007294">
    <property type="term" value="P:germarium-derived oocyte fate determination"/>
    <property type="evidence" value="ECO:0000315"/>
    <property type="project" value="FlyBase"/>
</dbReference>
<dbReference type="GO" id="GO:0008298">
    <property type="term" value="P:intracellular mRNA localization"/>
    <property type="evidence" value="ECO:0000315"/>
    <property type="project" value="FlyBase"/>
</dbReference>
<dbReference type="GO" id="GO:0072393">
    <property type="term" value="P:microtubule anchoring at microtubule organizing center"/>
    <property type="evidence" value="ECO:0000318"/>
    <property type="project" value="GO_Central"/>
</dbReference>
<dbReference type="GO" id="GO:0051028">
    <property type="term" value="P:mRNA transport"/>
    <property type="evidence" value="ECO:0000314"/>
    <property type="project" value="FlyBase"/>
</dbReference>
<dbReference type="GO" id="GO:0007309">
    <property type="term" value="P:oocyte axis specification"/>
    <property type="evidence" value="ECO:0000304"/>
    <property type="project" value="FlyBase"/>
</dbReference>
<dbReference type="GO" id="GO:0008103">
    <property type="term" value="P:oocyte microtubule cytoskeleton polarization"/>
    <property type="evidence" value="ECO:0000315"/>
    <property type="project" value="FlyBase"/>
</dbReference>
<dbReference type="GO" id="GO:0007312">
    <property type="term" value="P:oocyte nucleus migration involved in oocyte dorsal/ventral axis specification"/>
    <property type="evidence" value="ECO:0000304"/>
    <property type="project" value="FlyBase"/>
</dbReference>
<dbReference type="GO" id="GO:0048477">
    <property type="term" value="P:oogenesis"/>
    <property type="evidence" value="ECO:0000315"/>
    <property type="project" value="FlyBase"/>
</dbReference>
<dbReference type="GO" id="GO:2000370">
    <property type="term" value="P:positive regulation of clathrin-dependent endocytosis"/>
    <property type="evidence" value="ECO:0000315"/>
    <property type="project" value="FlyBase"/>
</dbReference>
<dbReference type="GO" id="GO:2000302">
    <property type="term" value="P:positive regulation of synaptic vesicle exocytosis"/>
    <property type="evidence" value="ECO:0000315"/>
    <property type="project" value="FlyBase"/>
</dbReference>
<dbReference type="GO" id="GO:0033365">
    <property type="term" value="P:protein localization to organelle"/>
    <property type="evidence" value="ECO:0000318"/>
    <property type="project" value="GO_Central"/>
</dbReference>
<dbReference type="GO" id="GO:0098840">
    <property type="term" value="P:protein transport along microtubule"/>
    <property type="evidence" value="ECO:0000315"/>
    <property type="project" value="FlyBase"/>
</dbReference>
<dbReference type="GO" id="GO:0030100">
    <property type="term" value="P:regulation of endocytosis"/>
    <property type="evidence" value="ECO:0000315"/>
    <property type="project" value="FlyBase"/>
</dbReference>
<dbReference type="GO" id="GO:0070507">
    <property type="term" value="P:regulation of microtubule cytoskeleton organization"/>
    <property type="evidence" value="ECO:0000318"/>
    <property type="project" value="GO_Central"/>
</dbReference>
<dbReference type="GO" id="GO:0050658">
    <property type="term" value="P:RNA transport"/>
    <property type="evidence" value="ECO:0000315"/>
    <property type="project" value="FlyBase"/>
</dbReference>
<dbReference type="GO" id="GO:0048488">
    <property type="term" value="P:synaptic vesicle endocytosis"/>
    <property type="evidence" value="ECO:0000316"/>
    <property type="project" value="FlyBase"/>
</dbReference>
<dbReference type="Gene3D" id="6.10.250.2470">
    <property type="match status" value="1"/>
</dbReference>
<dbReference type="InterPro" id="IPR018477">
    <property type="entry name" value="BICD"/>
</dbReference>
<dbReference type="PANTHER" id="PTHR31233">
    <property type="entry name" value="BICAUDAL D FAMILY MEMBER"/>
    <property type="match status" value="1"/>
</dbReference>
<dbReference type="PANTHER" id="PTHR31233:SF6">
    <property type="entry name" value="PROTEIN BICAUDAL D"/>
    <property type="match status" value="1"/>
</dbReference>
<dbReference type="Pfam" id="PF09730">
    <property type="entry name" value="BicD"/>
    <property type="match status" value="2"/>
</dbReference>
<proteinExistence type="evidence at protein level"/>
<organism evidence="14">
    <name type="scientific">Drosophila melanogaster</name>
    <name type="common">Fruit fly</name>
    <dbReference type="NCBI Taxonomy" id="7227"/>
    <lineage>
        <taxon>Eukaryota</taxon>
        <taxon>Metazoa</taxon>
        <taxon>Ecdysozoa</taxon>
        <taxon>Arthropoda</taxon>
        <taxon>Hexapoda</taxon>
        <taxon>Insecta</taxon>
        <taxon>Pterygota</taxon>
        <taxon>Neoptera</taxon>
        <taxon>Endopterygota</taxon>
        <taxon>Diptera</taxon>
        <taxon>Brachycera</taxon>
        <taxon>Muscomorpha</taxon>
        <taxon>Ephydroidea</taxon>
        <taxon>Drosophilidae</taxon>
        <taxon>Drosophila</taxon>
        <taxon>Sophophora</taxon>
    </lineage>
</organism>
<comment type="function">
    <text evidence="4 6 9 10 11">This protein is essential for differentiation. It may play a role in localizing of Nanos (a maternal determinant) activity in oocytes. Functions redundantly with BicDR (PubMed:38264934). During oogenesis, plays a specific role, together with Rab6 but independently of Sec5, in the polarization of the oocyte microtubule cytoskeleton, in oskar mRNA localization and in the anterodorsal secretion of grk. Plays a role in the biogenesis of annulate lamellae containing nuclear pore complex components (PubMed:31626769). During macrochaetae development, together with BicDR, involved in Rab 6 and Spn-F stability and distribution and actin cytoskeleton organization (PubMed:38264934).</text>
</comment>
<comment type="subunit">
    <text evidence="4 6 11">May homodimerize but does not interact with BicDR (PubMed:38264934). Interacts (via C-terminal domain) with Rab6.</text>
</comment>
<comment type="interaction">
    <interactant intactId="EBI-112159">
        <id>P16568</id>
    </interactant>
    <interactant intactId="EBI-160368">
        <id>P29742</id>
        <label>Chc</label>
    </interactant>
    <organismsDiffer>false</organismsDiffer>
    <experiments>5</experiments>
</comment>
<comment type="subcellular location">
    <subcellularLocation>
        <location evidence="12">Cytoplasm</location>
        <location evidence="12">Cytoskeleton</location>
    </subcellularLocation>
</comment>
<comment type="tissue specificity">
    <text evidence="8">In ovaries, expressed in oocyte and nurse cells.</text>
</comment>
<comment type="developmental stage">
    <text evidence="3 8">Expressed maternally and zygotically (PubMed:2576013). Expressed during oogenesis and throughout development (PubMed:11546740, PubMed:2576013).</text>
</comment>
<comment type="disruption phenotype">
    <text evidence="9 10 11">Viable and fertile (PubMed:38264934). Post eclosion discolored, short and brittle posterior scutellar bristle macrochaetae; this phenotype is more common in females than in males (PubMed:38264934). Pupal to adult lethal when combined with mutations in BicDR (PubMed:38264934). Mutant embryos show Nanos mislocalization and thus bicaudal development (PubMed:2590944). RNAi-mediated knockdown results in sterility and egg chamber defects including loss of annulate lamellae (PubMed:31626769).</text>
</comment>
<comment type="similarity">
    <text evidence="12">Belongs to the BicD family.</text>
</comment>
<keyword id="KW-0002">3D-structure</keyword>
<keyword id="KW-0175">Coiled coil</keyword>
<keyword id="KW-0963">Cytoplasm</keyword>
<keyword id="KW-0206">Cytoskeleton</keyword>
<keyword id="KW-0217">Developmental protein</keyword>
<keyword id="KW-0597">Phosphoprotein</keyword>
<keyword id="KW-1185">Reference proteome</keyword>
<evidence type="ECO:0000255" key="1"/>
<evidence type="ECO:0000256" key="2">
    <source>
        <dbReference type="SAM" id="MobiDB-lite"/>
    </source>
</evidence>
<evidence type="ECO:0000269" key="3">
    <source>
    </source>
</evidence>
<evidence type="ECO:0000269" key="4">
    <source>
    </source>
</evidence>
<evidence type="ECO:0000269" key="5">
    <source>
    </source>
</evidence>
<evidence type="ECO:0000269" key="6">
    <source>
    </source>
</evidence>
<evidence type="ECO:0000269" key="7">
    <source>
    </source>
</evidence>
<evidence type="ECO:0000269" key="8">
    <source>
    </source>
</evidence>
<evidence type="ECO:0000269" key="9">
    <source>
    </source>
</evidence>
<evidence type="ECO:0000269" key="10">
    <source>
    </source>
</evidence>
<evidence type="ECO:0000269" key="11">
    <source>
    </source>
</evidence>
<evidence type="ECO:0000305" key="12"/>
<evidence type="ECO:0000312" key="13">
    <source>
        <dbReference type="FlyBase" id="FBgn0000183"/>
    </source>
</evidence>
<evidence type="ECO:0000312" key="14">
    <source>
        <dbReference type="Proteomes" id="UP000000803"/>
    </source>
</evidence>
<evidence type="ECO:0007829" key="15">
    <source>
        <dbReference type="PDB" id="4BL6"/>
    </source>
</evidence>
<feature type="chain" id="PRO_0000205361" description="Protein bicaudal D">
    <location>
        <begin position="1"/>
        <end position="782"/>
    </location>
</feature>
<feature type="region of interest" description="Interaction with Rab6">
    <location>
        <begin position="699"/>
        <end position="722"/>
    </location>
</feature>
<feature type="region of interest" description="Disordered" evidence="2">
    <location>
        <begin position="744"/>
        <end position="782"/>
    </location>
</feature>
<feature type="coiled-coil region" evidence="1">
    <location>
        <begin position="15"/>
        <end position="77"/>
    </location>
</feature>
<feature type="coiled-coil region" evidence="1">
    <location>
        <begin position="107"/>
        <end position="249"/>
    </location>
</feature>
<feature type="coiled-coil region" evidence="1">
    <location>
        <begin position="320"/>
        <end position="368"/>
    </location>
</feature>
<feature type="coiled-coil region" evidence="1">
    <location>
        <begin position="444"/>
        <end position="477"/>
    </location>
</feature>
<feature type="coiled-coil region" evidence="1">
    <location>
        <begin position="603"/>
        <end position="630"/>
    </location>
</feature>
<feature type="coiled-coil region" evidence="1">
    <location>
        <begin position="695"/>
        <end position="743"/>
    </location>
</feature>
<feature type="compositionally biased region" description="Polar residues" evidence="2">
    <location>
        <begin position="757"/>
        <end position="767"/>
    </location>
</feature>
<feature type="compositionally biased region" description="Low complexity" evidence="2">
    <location>
        <begin position="768"/>
        <end position="782"/>
    </location>
</feature>
<feature type="modified residue" description="Phosphoserine" evidence="5 7">
    <location>
        <position position="103"/>
    </location>
</feature>
<feature type="modified residue" description="Phosphoserine" evidence="7">
    <location>
        <position position="285"/>
    </location>
</feature>
<feature type="modified residue" description="Phosphoserine" evidence="7">
    <location>
        <position position="288"/>
    </location>
</feature>
<feature type="modified residue" description="Phosphoserine" evidence="7">
    <location>
        <position position="305"/>
    </location>
</feature>
<feature type="modified residue" description="Phosphothreonine" evidence="7">
    <location>
        <position position="306"/>
    </location>
</feature>
<feature type="modified residue" description="Phosphoserine" evidence="7">
    <location>
        <position position="310"/>
    </location>
</feature>
<feature type="modified residue" description="Phosphoserine" evidence="7">
    <location>
        <position position="528"/>
    </location>
</feature>
<feature type="sequence conflict" description="In Ref. 1; AAA28393." evidence="12" ref="1">
    <original>A</original>
    <variation>S</variation>
    <location>
        <position position="296"/>
    </location>
</feature>
<feature type="sequence conflict" description="In Ref. 1; AAA28393." evidence="12" ref="1">
    <original>L</original>
    <variation>P</variation>
    <location>
        <position position="318"/>
    </location>
</feature>
<feature type="sequence conflict" description="In Ref. 1; AAA28393." evidence="12" ref="1">
    <original>H</original>
    <variation>R</variation>
    <location>
        <position position="477"/>
    </location>
</feature>
<feature type="helix" evidence="15">
    <location>
        <begin position="664"/>
        <end position="739"/>
    </location>
</feature>
<reference key="1">
    <citation type="journal article" date="1989" name="Cell">
        <title>Structure of the Drosophila BicaudalD protein and its role in localizing the the posterior determinant nanos.</title>
        <authorList>
            <person name="Wharton R.P."/>
            <person name="Struhl G."/>
        </authorList>
    </citation>
    <scope>NUCLEOTIDE SEQUENCE [MRNA]</scope>
    <scope>FUNCTION</scope>
    <scope>DISRUPTION PHENOTYPE</scope>
</reference>
<reference key="2">
    <citation type="journal article" date="1989" name="Genes Dev.">
        <title>Bicaudal-D, a Drosophila gene involved in developmental asymmetry: localized transcript accumulation in ovaries and sequence similarity to myosin heavy chain tail domains.</title>
        <authorList>
            <person name="Suter B."/>
            <person name="Romberg L.M."/>
            <person name="Steward R."/>
        </authorList>
    </citation>
    <scope>NUCLEOTIDE SEQUENCE [MRNA]</scope>
    <scope>TISSUE SPECIFICITY</scope>
    <scope>DEVELOPMENTAL STAGE</scope>
    <source>
        <strain>Oregon-R</strain>
    </source>
</reference>
<reference key="3">
    <citation type="journal article" date="2000" name="Science">
        <title>The genome sequence of Drosophila melanogaster.</title>
        <authorList>
            <person name="Adams M.D."/>
            <person name="Celniker S.E."/>
            <person name="Holt R.A."/>
            <person name="Evans C.A."/>
            <person name="Gocayne J.D."/>
            <person name="Amanatides P.G."/>
            <person name="Scherer S.E."/>
            <person name="Li P.W."/>
            <person name="Hoskins R.A."/>
            <person name="Galle R.F."/>
            <person name="George R.A."/>
            <person name="Lewis S.E."/>
            <person name="Richards S."/>
            <person name="Ashburner M."/>
            <person name="Henderson S.N."/>
            <person name="Sutton G.G."/>
            <person name="Wortman J.R."/>
            <person name="Yandell M.D."/>
            <person name="Zhang Q."/>
            <person name="Chen L.X."/>
            <person name="Brandon R.C."/>
            <person name="Rogers Y.-H.C."/>
            <person name="Blazej R.G."/>
            <person name="Champe M."/>
            <person name="Pfeiffer B.D."/>
            <person name="Wan K.H."/>
            <person name="Doyle C."/>
            <person name="Baxter E.G."/>
            <person name="Helt G."/>
            <person name="Nelson C.R."/>
            <person name="Miklos G.L.G."/>
            <person name="Abril J.F."/>
            <person name="Agbayani A."/>
            <person name="An H.-J."/>
            <person name="Andrews-Pfannkoch C."/>
            <person name="Baldwin D."/>
            <person name="Ballew R.M."/>
            <person name="Basu A."/>
            <person name="Baxendale J."/>
            <person name="Bayraktaroglu L."/>
            <person name="Beasley E.M."/>
            <person name="Beeson K.Y."/>
            <person name="Benos P.V."/>
            <person name="Berman B.P."/>
            <person name="Bhandari D."/>
            <person name="Bolshakov S."/>
            <person name="Borkova D."/>
            <person name="Botchan M.R."/>
            <person name="Bouck J."/>
            <person name="Brokstein P."/>
            <person name="Brottier P."/>
            <person name="Burtis K.C."/>
            <person name="Busam D.A."/>
            <person name="Butler H."/>
            <person name="Cadieu E."/>
            <person name="Center A."/>
            <person name="Chandra I."/>
            <person name="Cherry J.M."/>
            <person name="Cawley S."/>
            <person name="Dahlke C."/>
            <person name="Davenport L.B."/>
            <person name="Davies P."/>
            <person name="de Pablos B."/>
            <person name="Delcher A."/>
            <person name="Deng Z."/>
            <person name="Mays A.D."/>
            <person name="Dew I."/>
            <person name="Dietz S.M."/>
            <person name="Dodson K."/>
            <person name="Doup L.E."/>
            <person name="Downes M."/>
            <person name="Dugan-Rocha S."/>
            <person name="Dunkov B.C."/>
            <person name="Dunn P."/>
            <person name="Durbin K.J."/>
            <person name="Evangelista C.C."/>
            <person name="Ferraz C."/>
            <person name="Ferriera S."/>
            <person name="Fleischmann W."/>
            <person name="Fosler C."/>
            <person name="Gabrielian A.E."/>
            <person name="Garg N.S."/>
            <person name="Gelbart W.M."/>
            <person name="Glasser K."/>
            <person name="Glodek A."/>
            <person name="Gong F."/>
            <person name="Gorrell J.H."/>
            <person name="Gu Z."/>
            <person name="Guan P."/>
            <person name="Harris M."/>
            <person name="Harris N.L."/>
            <person name="Harvey D.A."/>
            <person name="Heiman T.J."/>
            <person name="Hernandez J.R."/>
            <person name="Houck J."/>
            <person name="Hostin D."/>
            <person name="Houston K.A."/>
            <person name="Howland T.J."/>
            <person name="Wei M.-H."/>
            <person name="Ibegwam C."/>
            <person name="Jalali M."/>
            <person name="Kalush F."/>
            <person name="Karpen G.H."/>
            <person name="Ke Z."/>
            <person name="Kennison J.A."/>
            <person name="Ketchum K.A."/>
            <person name="Kimmel B.E."/>
            <person name="Kodira C.D."/>
            <person name="Kraft C.L."/>
            <person name="Kravitz S."/>
            <person name="Kulp D."/>
            <person name="Lai Z."/>
            <person name="Lasko P."/>
            <person name="Lei Y."/>
            <person name="Levitsky A.A."/>
            <person name="Li J.H."/>
            <person name="Li Z."/>
            <person name="Liang Y."/>
            <person name="Lin X."/>
            <person name="Liu X."/>
            <person name="Mattei B."/>
            <person name="McIntosh T.C."/>
            <person name="McLeod M.P."/>
            <person name="McPherson D."/>
            <person name="Merkulov G."/>
            <person name="Milshina N.V."/>
            <person name="Mobarry C."/>
            <person name="Morris J."/>
            <person name="Moshrefi A."/>
            <person name="Mount S.M."/>
            <person name="Moy M."/>
            <person name="Murphy B."/>
            <person name="Murphy L."/>
            <person name="Muzny D.M."/>
            <person name="Nelson D.L."/>
            <person name="Nelson D.R."/>
            <person name="Nelson K.A."/>
            <person name="Nixon K."/>
            <person name="Nusskern D.R."/>
            <person name="Pacleb J.M."/>
            <person name="Palazzolo M."/>
            <person name="Pittman G.S."/>
            <person name="Pan S."/>
            <person name="Pollard J."/>
            <person name="Puri V."/>
            <person name="Reese M.G."/>
            <person name="Reinert K."/>
            <person name="Remington K."/>
            <person name="Saunders R.D.C."/>
            <person name="Scheeler F."/>
            <person name="Shen H."/>
            <person name="Shue B.C."/>
            <person name="Siden-Kiamos I."/>
            <person name="Simpson M."/>
            <person name="Skupski M.P."/>
            <person name="Smith T.J."/>
            <person name="Spier E."/>
            <person name="Spradling A.C."/>
            <person name="Stapleton M."/>
            <person name="Strong R."/>
            <person name="Sun E."/>
            <person name="Svirskas R."/>
            <person name="Tector C."/>
            <person name="Turner R."/>
            <person name="Venter E."/>
            <person name="Wang A.H."/>
            <person name="Wang X."/>
            <person name="Wang Z.-Y."/>
            <person name="Wassarman D.A."/>
            <person name="Weinstock G.M."/>
            <person name="Weissenbach J."/>
            <person name="Williams S.M."/>
            <person name="Woodage T."/>
            <person name="Worley K.C."/>
            <person name="Wu D."/>
            <person name="Yang S."/>
            <person name="Yao Q.A."/>
            <person name="Ye J."/>
            <person name="Yeh R.-F."/>
            <person name="Zaveri J.S."/>
            <person name="Zhan M."/>
            <person name="Zhang G."/>
            <person name="Zhao Q."/>
            <person name="Zheng L."/>
            <person name="Zheng X.H."/>
            <person name="Zhong F.N."/>
            <person name="Zhong W."/>
            <person name="Zhou X."/>
            <person name="Zhu S.C."/>
            <person name="Zhu X."/>
            <person name="Smith H.O."/>
            <person name="Gibbs R.A."/>
            <person name="Myers E.W."/>
            <person name="Rubin G.M."/>
            <person name="Venter J.C."/>
        </authorList>
    </citation>
    <scope>NUCLEOTIDE SEQUENCE [LARGE SCALE GENOMIC DNA]</scope>
    <source>
        <strain>Berkeley</strain>
    </source>
</reference>
<reference key="4">
    <citation type="journal article" date="2002" name="Genome Biol.">
        <title>Annotation of the Drosophila melanogaster euchromatic genome: a systematic review.</title>
        <authorList>
            <person name="Misra S."/>
            <person name="Crosby M.A."/>
            <person name="Mungall C.J."/>
            <person name="Matthews B.B."/>
            <person name="Campbell K.S."/>
            <person name="Hradecky P."/>
            <person name="Huang Y."/>
            <person name="Kaminker J.S."/>
            <person name="Millburn G.H."/>
            <person name="Prochnik S.E."/>
            <person name="Smith C.D."/>
            <person name="Tupy J.L."/>
            <person name="Whitfield E.J."/>
            <person name="Bayraktaroglu L."/>
            <person name="Berman B.P."/>
            <person name="Bettencourt B.R."/>
            <person name="Celniker S.E."/>
            <person name="de Grey A.D.N.J."/>
            <person name="Drysdale R.A."/>
            <person name="Harris N.L."/>
            <person name="Richter J."/>
            <person name="Russo S."/>
            <person name="Schroeder A.J."/>
            <person name="Shu S.Q."/>
            <person name="Stapleton M."/>
            <person name="Yamada C."/>
            <person name="Ashburner M."/>
            <person name="Gelbart W.M."/>
            <person name="Rubin G.M."/>
            <person name="Lewis S.E."/>
        </authorList>
    </citation>
    <scope>GENOME REANNOTATION</scope>
    <source>
        <strain>Berkeley</strain>
    </source>
</reference>
<reference key="5">
    <citation type="journal article" date="2002" name="Genome Biol.">
        <title>A Drosophila full-length cDNA resource.</title>
        <authorList>
            <person name="Stapleton M."/>
            <person name="Carlson J.W."/>
            <person name="Brokstein P."/>
            <person name="Yu C."/>
            <person name="Champe M."/>
            <person name="George R.A."/>
            <person name="Guarin H."/>
            <person name="Kronmiller B."/>
            <person name="Pacleb J.M."/>
            <person name="Park S."/>
            <person name="Wan K.H."/>
            <person name="Rubin G.M."/>
            <person name="Celniker S.E."/>
        </authorList>
    </citation>
    <scope>NUCLEOTIDE SEQUENCE [LARGE SCALE MRNA]</scope>
    <source>
        <strain>Berkeley</strain>
        <tissue>Embryo</tissue>
    </source>
</reference>
<reference key="6">
    <citation type="journal article" date="2001" name="Development">
        <title>Me31B silences translation of oocyte-localizing RNAs through the formation of cytoplasmic RNP complex during Drosophila oogenesis.</title>
        <authorList>
            <person name="Nakamura A."/>
            <person name="Amikura R."/>
            <person name="Hanyu K."/>
            <person name="Kobayashi S."/>
        </authorList>
    </citation>
    <scope>DEVELOPMENTAL STAGE</scope>
</reference>
<reference key="7">
    <citation type="journal article" date="2007" name="Development">
        <title>Rab6 mediates membrane organization and determinant localization during Drosophila oogenesis.</title>
        <authorList>
            <person name="Coutelis J.B."/>
            <person name="Ephrussi A."/>
        </authorList>
    </citation>
    <scope>FUNCTION</scope>
    <scope>INTERACTION WITH RAB6</scope>
</reference>
<reference key="8">
    <citation type="journal article" date="2007" name="Development">
        <title>Rab6 and the secretory pathway affect oocyte polarity in Drosophila.</title>
        <authorList>
            <person name="Januschke J."/>
            <person name="Nicolas E."/>
            <person name="Compagnon J."/>
            <person name="Formstecher E."/>
            <person name="Goud B."/>
            <person name="Guichet A."/>
        </authorList>
    </citation>
    <scope>FUNCTION</scope>
    <scope>INTERACTION WITH RAB6</scope>
</reference>
<reference key="9">
    <citation type="journal article" date="2007" name="Mol. Biosyst.">
        <title>An integrated chemical, mass spectrometric and computational strategy for (quantitative) phosphoproteomics: application to Drosophila melanogaster Kc167 cells.</title>
        <authorList>
            <person name="Bodenmiller B."/>
            <person name="Mueller L.N."/>
            <person name="Pedrioli P.G.A."/>
            <person name="Pflieger D."/>
            <person name="Juenger M.A."/>
            <person name="Eng J.K."/>
            <person name="Aebersold R."/>
            <person name="Tao W.A."/>
        </authorList>
    </citation>
    <scope>PHOSPHORYLATION [LARGE SCALE ANALYSIS] AT SER-103</scope>
    <scope>IDENTIFICATION BY MASS SPECTROMETRY</scope>
</reference>
<reference key="10">
    <citation type="journal article" date="2008" name="J. Proteome Res.">
        <title>Phosphoproteome analysis of Drosophila melanogaster embryos.</title>
        <authorList>
            <person name="Zhai B."/>
            <person name="Villen J."/>
            <person name="Beausoleil S.A."/>
            <person name="Mintseris J."/>
            <person name="Gygi S.P."/>
        </authorList>
    </citation>
    <scope>PHOSPHORYLATION [LARGE SCALE ANALYSIS] AT SER-103; SER-285; SER-288; SER-305; THR-306; SER-310 AND SER-528</scope>
    <scope>IDENTIFICATION BY MASS SPECTROMETRY</scope>
    <source>
        <tissue>Embryo</tissue>
    </source>
</reference>
<reference key="11">
    <citation type="journal article" date="2019" name="Cell">
        <title>Nuclear Pores Assemble from Nucleoporin Condensates During Oogenesis.</title>
        <authorList>
            <person name="Hampoelz B."/>
            <person name="Schwarz A."/>
            <person name="Ronchi P."/>
            <person name="Bragulat-Teixidor H."/>
            <person name="Tischer C."/>
            <person name="Gaspar I."/>
            <person name="Ephrussi A."/>
            <person name="Schwab Y."/>
            <person name="Beck M."/>
        </authorList>
    </citation>
    <scope>FUNCTION</scope>
    <scope>DISRUPTION PHENOTYPE</scope>
</reference>
<reference key="12">
    <citation type="journal article" date="2024" name="J. Cell Sci.">
        <title>Role of BicDR in bristle shaft construction and support of BicD functions.</title>
        <authorList>
            <person name="Jejina A."/>
            <person name="Ayala Y."/>
            <person name="Beuchle D."/>
            <person name="Hoehener T."/>
            <person name="Doerig R.E."/>
            <person name="Vazquez-Pianzola P."/>
            <person name="Hernandez G."/>
            <person name="Suter B."/>
        </authorList>
    </citation>
    <scope>FUNCTION</scope>
    <scope>DISRUPTION PHENOTYPE</scope>
</reference>
<protein>
    <recommendedName>
        <fullName evidence="13">Protein bicaudal D</fullName>
    </recommendedName>
</protein>
<sequence>MSSASNNGPSADQSVQDLQMEVERLTRELDQVSSASAQSAQYGLSLLEEKSALQQKCEELETLYDNTRHELDITQEALTKFQTSQKVTNKTGIEQEDALLNESAARETSLNLQIFDLENELKQLRHELERVRNERDRMLQENSDFGRDKSDSEADRLRLKSELKDLKFRETRMLSEYSELEEENISLQKQVSSLRSSQVEFEGAKHEIRRLTEEVELLNQQVDELANLKKIAEKQMEEALETLQGEREAKYALKKELDGHLNRESMYHISNLAYSIRSNMEDNASNNSDGEEENLALKRLEADLSTELKSPDGTKCDLFSEIHLNELKKLEKQLESMESEKTHLTANLREAQTSLDKSQNELQNFMSRLALLAAHVDALVQLKKQIDVKEQGKEGGQKKDELEQQLRALISQYANWFTLSAKEIDGLKTDIAELQKGLNYTDATTTLRNEVTNLKNKLLATEQKSLDLQSDVQTLTHISQNAGQSLGSARSTLVALSDDLAQLYHLVCTVNGETPTRVLLDHKTDDMSFENDSLTAIQSQFKSDVFIAKPQIVEDLQGLADSVEIKKYVDTVSDQIKYLKTAVEHTIDMNKHKIRSEGGDALEKVNTEEMEELQEQIVKLKSLLSVKREQIGTLRNVLKSNKQTAEVALTNLKSKYENEKIIVSDTMSKLRNELRLLKEDAATFSSLRAMFAARCEEYVTQVDDLNRQLEAAEEEKKTLNQLLRLAVQQKLALTQRLEEMEMDREMRHVRRPMPAQRGTSGKSSFSTRPSSRNPASSNANPF</sequence>
<name>BICD_DROME</name>
<gene>
    <name evidence="13" type="primary">BicD</name>
    <name evidence="13" type="ORF">CG6605</name>
</gene>